<organism>
    <name type="scientific">Chromohalobacter salexigens (strain ATCC BAA-138 / DSM 3043 / CIP 106854 / NCIMB 13768 / 1H11)</name>
    <dbReference type="NCBI Taxonomy" id="290398"/>
    <lineage>
        <taxon>Bacteria</taxon>
        <taxon>Pseudomonadati</taxon>
        <taxon>Pseudomonadota</taxon>
        <taxon>Gammaproteobacteria</taxon>
        <taxon>Oceanospirillales</taxon>
        <taxon>Halomonadaceae</taxon>
        <taxon>Chromohalobacter</taxon>
    </lineage>
</organism>
<name>RS19_CHRSD</name>
<protein>
    <recommendedName>
        <fullName evidence="1">Small ribosomal subunit protein uS19</fullName>
    </recommendedName>
    <alternativeName>
        <fullName evidence="2">30S ribosomal protein S19</fullName>
    </alternativeName>
</protein>
<accession>Q1R0H1</accession>
<reference key="1">
    <citation type="journal article" date="2011" name="Stand. Genomic Sci.">
        <title>Complete genome sequence of the halophilic and highly halotolerant Chromohalobacter salexigens type strain (1H11(T)).</title>
        <authorList>
            <person name="Copeland A."/>
            <person name="O'Connor K."/>
            <person name="Lucas S."/>
            <person name="Lapidus A."/>
            <person name="Berry K.W."/>
            <person name="Detter J.C."/>
            <person name="Del Rio T.G."/>
            <person name="Hammon N."/>
            <person name="Dalin E."/>
            <person name="Tice H."/>
            <person name="Pitluck S."/>
            <person name="Bruce D."/>
            <person name="Goodwin L."/>
            <person name="Han C."/>
            <person name="Tapia R."/>
            <person name="Saunders E."/>
            <person name="Schmutz J."/>
            <person name="Brettin T."/>
            <person name="Larimer F."/>
            <person name="Land M."/>
            <person name="Hauser L."/>
            <person name="Vargas C."/>
            <person name="Nieto J.J."/>
            <person name="Kyrpides N.C."/>
            <person name="Ivanova N."/>
            <person name="Goker M."/>
            <person name="Klenk H.P."/>
            <person name="Csonka L.N."/>
            <person name="Woyke T."/>
        </authorList>
    </citation>
    <scope>NUCLEOTIDE SEQUENCE [LARGE SCALE GENOMIC DNA]</scope>
    <source>
        <strain>ATCC BAA-138 / DSM 3043 / CIP 106854 / NCIMB 13768 / 1H11</strain>
    </source>
</reference>
<sequence>MPRSLKKGPFIDLHLLKKVETAVEKSDRKPIKTWSRRSMILPNMVGLTIAVHNGRQHVPVHVSEEMVGHKLGEFAATRTYRGHAADKKAKR</sequence>
<keyword id="KW-1185">Reference proteome</keyword>
<keyword id="KW-0687">Ribonucleoprotein</keyword>
<keyword id="KW-0689">Ribosomal protein</keyword>
<keyword id="KW-0694">RNA-binding</keyword>
<keyword id="KW-0699">rRNA-binding</keyword>
<feature type="chain" id="PRO_0000265346" description="Small ribosomal subunit protein uS19">
    <location>
        <begin position="1"/>
        <end position="91"/>
    </location>
</feature>
<comment type="function">
    <text evidence="1">Protein S19 forms a complex with S13 that binds strongly to the 16S ribosomal RNA.</text>
</comment>
<comment type="similarity">
    <text evidence="1">Belongs to the universal ribosomal protein uS19 family.</text>
</comment>
<gene>
    <name evidence="1" type="primary">rpsS</name>
    <name type="ordered locus">Csal_0425</name>
</gene>
<evidence type="ECO:0000255" key="1">
    <source>
        <dbReference type="HAMAP-Rule" id="MF_00531"/>
    </source>
</evidence>
<evidence type="ECO:0000305" key="2"/>
<dbReference type="EMBL" id="CP000285">
    <property type="protein sequence ID" value="ABE57787.1"/>
    <property type="molecule type" value="Genomic_DNA"/>
</dbReference>
<dbReference type="RefSeq" id="WP_011505733.1">
    <property type="nucleotide sequence ID" value="NC_007963.1"/>
</dbReference>
<dbReference type="SMR" id="Q1R0H1"/>
<dbReference type="STRING" id="290398.Csal_0425"/>
<dbReference type="GeneID" id="95333178"/>
<dbReference type="KEGG" id="csa:Csal_0425"/>
<dbReference type="eggNOG" id="COG0185">
    <property type="taxonomic scope" value="Bacteria"/>
</dbReference>
<dbReference type="HOGENOM" id="CLU_144911_0_1_6"/>
<dbReference type="OrthoDB" id="9797833at2"/>
<dbReference type="Proteomes" id="UP000000239">
    <property type="component" value="Chromosome"/>
</dbReference>
<dbReference type="GO" id="GO:0005737">
    <property type="term" value="C:cytoplasm"/>
    <property type="evidence" value="ECO:0007669"/>
    <property type="project" value="UniProtKB-ARBA"/>
</dbReference>
<dbReference type="GO" id="GO:0015935">
    <property type="term" value="C:small ribosomal subunit"/>
    <property type="evidence" value="ECO:0007669"/>
    <property type="project" value="InterPro"/>
</dbReference>
<dbReference type="GO" id="GO:0019843">
    <property type="term" value="F:rRNA binding"/>
    <property type="evidence" value="ECO:0007669"/>
    <property type="project" value="UniProtKB-UniRule"/>
</dbReference>
<dbReference type="GO" id="GO:0003735">
    <property type="term" value="F:structural constituent of ribosome"/>
    <property type="evidence" value="ECO:0007669"/>
    <property type="project" value="InterPro"/>
</dbReference>
<dbReference type="GO" id="GO:0000028">
    <property type="term" value="P:ribosomal small subunit assembly"/>
    <property type="evidence" value="ECO:0007669"/>
    <property type="project" value="TreeGrafter"/>
</dbReference>
<dbReference type="GO" id="GO:0006412">
    <property type="term" value="P:translation"/>
    <property type="evidence" value="ECO:0007669"/>
    <property type="project" value="UniProtKB-UniRule"/>
</dbReference>
<dbReference type="FunFam" id="3.30.860.10:FF:000001">
    <property type="entry name" value="30S ribosomal protein S19"/>
    <property type="match status" value="1"/>
</dbReference>
<dbReference type="Gene3D" id="3.30.860.10">
    <property type="entry name" value="30s Ribosomal Protein S19, Chain A"/>
    <property type="match status" value="1"/>
</dbReference>
<dbReference type="HAMAP" id="MF_00531">
    <property type="entry name" value="Ribosomal_uS19"/>
    <property type="match status" value="1"/>
</dbReference>
<dbReference type="InterPro" id="IPR002222">
    <property type="entry name" value="Ribosomal_uS19"/>
</dbReference>
<dbReference type="InterPro" id="IPR005732">
    <property type="entry name" value="Ribosomal_uS19_bac-type"/>
</dbReference>
<dbReference type="InterPro" id="IPR020934">
    <property type="entry name" value="Ribosomal_uS19_CS"/>
</dbReference>
<dbReference type="InterPro" id="IPR023575">
    <property type="entry name" value="Ribosomal_uS19_SF"/>
</dbReference>
<dbReference type="NCBIfam" id="TIGR01050">
    <property type="entry name" value="rpsS_bact"/>
    <property type="match status" value="1"/>
</dbReference>
<dbReference type="PANTHER" id="PTHR11880">
    <property type="entry name" value="RIBOSOMAL PROTEIN S19P FAMILY MEMBER"/>
    <property type="match status" value="1"/>
</dbReference>
<dbReference type="PANTHER" id="PTHR11880:SF8">
    <property type="entry name" value="SMALL RIBOSOMAL SUBUNIT PROTEIN US19M"/>
    <property type="match status" value="1"/>
</dbReference>
<dbReference type="Pfam" id="PF00203">
    <property type="entry name" value="Ribosomal_S19"/>
    <property type="match status" value="1"/>
</dbReference>
<dbReference type="PIRSF" id="PIRSF002144">
    <property type="entry name" value="Ribosomal_S19"/>
    <property type="match status" value="1"/>
</dbReference>
<dbReference type="PRINTS" id="PR00975">
    <property type="entry name" value="RIBOSOMALS19"/>
</dbReference>
<dbReference type="SUPFAM" id="SSF54570">
    <property type="entry name" value="Ribosomal protein S19"/>
    <property type="match status" value="1"/>
</dbReference>
<dbReference type="PROSITE" id="PS00323">
    <property type="entry name" value="RIBOSOMAL_S19"/>
    <property type="match status" value="1"/>
</dbReference>
<proteinExistence type="inferred from homology"/>